<accession>Q6TEL0</accession>
<accession>Q7SZD1</accession>
<evidence type="ECO:0000250" key="1">
    <source>
        <dbReference type="UniProtKB" id="Q13614"/>
    </source>
</evidence>
<evidence type="ECO:0000250" key="2">
    <source>
        <dbReference type="UniProtKB" id="Q96EF0"/>
    </source>
</evidence>
<evidence type="ECO:0000255" key="3">
    <source>
        <dbReference type="PROSITE-ProRule" id="PRU00669"/>
    </source>
</evidence>
<evidence type="ECO:0000255" key="4">
    <source>
        <dbReference type="PROSITE-ProRule" id="PRU10044"/>
    </source>
</evidence>
<evidence type="ECO:0000256" key="5">
    <source>
        <dbReference type="SAM" id="MobiDB-lite"/>
    </source>
</evidence>
<evidence type="ECO:0000305" key="6"/>
<organism>
    <name type="scientific">Danio rerio</name>
    <name type="common">Zebrafish</name>
    <name type="synonym">Brachydanio rerio</name>
    <dbReference type="NCBI Taxonomy" id="7955"/>
    <lineage>
        <taxon>Eukaryota</taxon>
        <taxon>Metazoa</taxon>
        <taxon>Chordata</taxon>
        <taxon>Craniata</taxon>
        <taxon>Vertebrata</taxon>
        <taxon>Euteleostomi</taxon>
        <taxon>Actinopterygii</taxon>
        <taxon>Neopterygii</taxon>
        <taxon>Teleostei</taxon>
        <taxon>Ostariophysi</taxon>
        <taxon>Cypriniformes</taxon>
        <taxon>Danionidae</taxon>
        <taxon>Danioninae</taxon>
        <taxon>Danio</taxon>
    </lineage>
</organism>
<feature type="chain" id="PRO_0000330036" description="Phosphatidylinositol-3,5-bisphosphate 3-phosphatase MTMR8">
    <location>
        <begin position="1"/>
        <end position="632"/>
    </location>
</feature>
<feature type="domain" description="Myotubularin phosphatase" evidence="3">
    <location>
        <begin position="126"/>
        <end position="500"/>
    </location>
</feature>
<feature type="region of interest" description="Disordered" evidence="5">
    <location>
        <begin position="545"/>
        <end position="632"/>
    </location>
</feature>
<feature type="compositionally biased region" description="Basic and acidic residues" evidence="5">
    <location>
        <begin position="602"/>
        <end position="632"/>
    </location>
</feature>
<feature type="active site" description="Phosphocysteine intermediate" evidence="4">
    <location>
        <position position="338"/>
    </location>
</feature>
<feature type="binding site" evidence="1">
    <location>
        <position position="250"/>
    </location>
    <ligand>
        <name>a 1,2-diacyl-sn-glycero-3-phospho-(1D-myo-inositol-3,5-bisphosphate)</name>
        <dbReference type="ChEBI" id="CHEBI:57923"/>
    </ligand>
</feature>
<feature type="binding site" evidence="1">
    <location>
        <position position="250"/>
    </location>
    <ligand>
        <name>a 1,2-diacyl-sn-glycero-3-phospho-(1D-myo-inositol-3-phosphate)</name>
        <dbReference type="ChEBI" id="CHEBI:58088"/>
    </ligand>
</feature>
<feature type="binding site" evidence="1">
    <location>
        <position position="275"/>
    </location>
    <ligand>
        <name>a 1,2-diacyl-sn-glycero-3-phospho-(1D-myo-inositol-3,5-bisphosphate)</name>
        <dbReference type="ChEBI" id="CHEBI:57923"/>
    </ligand>
</feature>
<feature type="binding site" evidence="1">
    <location>
        <position position="275"/>
    </location>
    <ligand>
        <name>a 1,2-diacyl-sn-glycero-3-phospho-(1D-myo-inositol-3-phosphate)</name>
        <dbReference type="ChEBI" id="CHEBI:58088"/>
    </ligand>
</feature>
<feature type="binding site" evidence="1">
    <location>
        <position position="276"/>
    </location>
    <ligand>
        <name>a 1,2-diacyl-sn-glycero-3-phospho-(1D-myo-inositol-3,5-bisphosphate)</name>
        <dbReference type="ChEBI" id="CHEBI:57923"/>
    </ligand>
</feature>
<feature type="binding site" evidence="1">
    <location>
        <position position="276"/>
    </location>
    <ligand>
        <name>a 1,2-diacyl-sn-glycero-3-phospho-(1D-myo-inositol-3-phosphate)</name>
        <dbReference type="ChEBI" id="CHEBI:58088"/>
    </ligand>
</feature>
<feature type="binding site" evidence="1">
    <location>
        <position position="339"/>
    </location>
    <ligand>
        <name>a 1,2-diacyl-sn-glycero-3-phospho-(1D-myo-inositol-3,5-bisphosphate)</name>
        <dbReference type="ChEBI" id="CHEBI:57923"/>
    </ligand>
</feature>
<feature type="binding site" evidence="1">
    <location>
        <position position="339"/>
    </location>
    <ligand>
        <name>a 1,2-diacyl-sn-glycero-3-phospho-(1D-myo-inositol-3-phosphate)</name>
        <dbReference type="ChEBI" id="CHEBI:58088"/>
    </ligand>
</feature>
<feature type="binding site" evidence="2">
    <location>
        <position position="339"/>
    </location>
    <ligand>
        <name>phosphate</name>
        <dbReference type="ChEBI" id="CHEBI:43474"/>
    </ligand>
</feature>
<feature type="binding site" evidence="1">
    <location>
        <position position="340"/>
    </location>
    <ligand>
        <name>a 1,2-diacyl-sn-glycero-3-phospho-(1D-myo-inositol-3,5-bisphosphate)</name>
        <dbReference type="ChEBI" id="CHEBI:57923"/>
    </ligand>
</feature>
<feature type="binding site" evidence="1">
    <location>
        <position position="340"/>
    </location>
    <ligand>
        <name>a 1,2-diacyl-sn-glycero-3-phospho-(1D-myo-inositol-3-phosphate)</name>
        <dbReference type="ChEBI" id="CHEBI:58088"/>
    </ligand>
</feature>
<feature type="binding site" evidence="2">
    <location>
        <position position="340"/>
    </location>
    <ligand>
        <name>phosphate</name>
        <dbReference type="ChEBI" id="CHEBI:43474"/>
    </ligand>
</feature>
<feature type="binding site" evidence="1">
    <location>
        <position position="341"/>
    </location>
    <ligand>
        <name>a 1,2-diacyl-sn-glycero-3-phospho-(1D-myo-inositol-3,5-bisphosphate)</name>
        <dbReference type="ChEBI" id="CHEBI:57923"/>
    </ligand>
</feature>
<feature type="binding site" evidence="1">
    <location>
        <position position="341"/>
    </location>
    <ligand>
        <name>a 1,2-diacyl-sn-glycero-3-phospho-(1D-myo-inositol-3-phosphate)</name>
        <dbReference type="ChEBI" id="CHEBI:58088"/>
    </ligand>
</feature>
<feature type="binding site" evidence="1">
    <location>
        <position position="342"/>
    </location>
    <ligand>
        <name>a 1,2-diacyl-sn-glycero-3-phospho-(1D-myo-inositol-3,5-bisphosphate)</name>
        <dbReference type="ChEBI" id="CHEBI:57923"/>
    </ligand>
</feature>
<feature type="binding site" evidence="1">
    <location>
        <position position="342"/>
    </location>
    <ligand>
        <name>a 1,2-diacyl-sn-glycero-3-phospho-(1D-myo-inositol-3-phosphate)</name>
        <dbReference type="ChEBI" id="CHEBI:58088"/>
    </ligand>
</feature>
<feature type="binding site" evidence="2">
    <location>
        <position position="342"/>
    </location>
    <ligand>
        <name>phosphate</name>
        <dbReference type="ChEBI" id="CHEBI:43474"/>
    </ligand>
</feature>
<feature type="binding site" evidence="1">
    <location>
        <position position="343"/>
    </location>
    <ligand>
        <name>a 1,2-diacyl-sn-glycero-3-phospho-(1D-myo-inositol-3,5-bisphosphate)</name>
        <dbReference type="ChEBI" id="CHEBI:57923"/>
    </ligand>
</feature>
<feature type="binding site" evidence="1">
    <location>
        <position position="343"/>
    </location>
    <ligand>
        <name>a 1,2-diacyl-sn-glycero-3-phospho-(1D-myo-inositol-3-phosphate)</name>
        <dbReference type="ChEBI" id="CHEBI:58088"/>
    </ligand>
</feature>
<feature type="binding site" evidence="2">
    <location>
        <position position="343"/>
    </location>
    <ligand>
        <name>phosphate</name>
        <dbReference type="ChEBI" id="CHEBI:43474"/>
    </ligand>
</feature>
<feature type="binding site" evidence="1">
    <location>
        <position position="344"/>
    </location>
    <ligand>
        <name>a 1,2-diacyl-sn-glycero-3-phospho-(1D-myo-inositol-3,5-bisphosphate)</name>
        <dbReference type="ChEBI" id="CHEBI:57923"/>
    </ligand>
</feature>
<feature type="binding site" evidence="1">
    <location>
        <position position="344"/>
    </location>
    <ligand>
        <name>a 1,2-diacyl-sn-glycero-3-phospho-(1D-myo-inositol-3-phosphate)</name>
        <dbReference type="ChEBI" id="CHEBI:58088"/>
    </ligand>
</feature>
<feature type="binding site" evidence="2">
    <location>
        <position position="344"/>
    </location>
    <ligand>
        <name>phosphate</name>
        <dbReference type="ChEBI" id="CHEBI:43474"/>
    </ligand>
</feature>
<feature type="binding site" evidence="1">
    <location>
        <position position="380"/>
    </location>
    <ligand>
        <name>a 1,2-diacyl-sn-glycero-3-phospho-(1D-myo-inositol-3,5-bisphosphate)</name>
        <dbReference type="ChEBI" id="CHEBI:57923"/>
    </ligand>
</feature>
<feature type="binding site" evidence="1">
    <location>
        <position position="384"/>
    </location>
    <ligand>
        <name>a 1,2-diacyl-sn-glycero-3-phospho-(1D-myo-inositol-3,5-bisphosphate)</name>
        <dbReference type="ChEBI" id="CHEBI:57923"/>
    </ligand>
</feature>
<feature type="binding site" evidence="1">
    <location>
        <position position="384"/>
    </location>
    <ligand>
        <name>a 1,2-diacyl-sn-glycero-3-phospho-(1D-myo-inositol-3-phosphate)</name>
        <dbReference type="ChEBI" id="CHEBI:58088"/>
    </ligand>
</feature>
<feature type="sequence conflict" description="In Ref. 3; AAH53411." evidence="6" ref="3">
    <original>T</original>
    <variation>A</variation>
    <location>
        <position position="48"/>
    </location>
</feature>
<feature type="sequence conflict" description="In Ref. 3; AAH53411." evidence="6" ref="3">
    <original>F</original>
    <variation>S</variation>
    <location>
        <position position="101"/>
    </location>
</feature>
<feature type="sequence conflict" description="In Ref. 3; AAH53411." evidence="6" ref="3">
    <original>S</original>
    <variation>A</variation>
    <location>
        <position position="163"/>
    </location>
</feature>
<feature type="sequence conflict" description="In Ref. 3; AAH53411." evidence="6" ref="3">
    <original>A</original>
    <variation>G</variation>
    <location>
        <position position="556"/>
    </location>
</feature>
<feature type="sequence conflict" description="In Ref. 3; AAH53411." evidence="6" ref="3">
    <original>F</original>
    <variation>S</variation>
    <location>
        <position position="618"/>
    </location>
</feature>
<protein>
    <recommendedName>
        <fullName evidence="2">Phosphatidylinositol-3,5-bisphosphate 3-phosphatase MTMR8</fullName>
        <ecNumber evidence="2">3.1.3.95</ecNumber>
    </recommendedName>
    <alternativeName>
        <fullName>Myotubularin-related protein 6</fullName>
    </alternativeName>
    <alternativeName>
        <fullName>Myotubularin-related protein 8</fullName>
    </alternativeName>
    <alternativeName>
        <fullName evidence="6">Phosphatidylinositol-3-phosphate phosphatase</fullName>
    </alternativeName>
</protein>
<comment type="function">
    <text evidence="2">Lipid phosphatase that specifically dephosphorylates the D-3 position of phosphatidylinositol 3-phosphate and phosphatidylinositol 3,5-bisphosphate, generating phosphatidylinositol and phosphatidylinositol 5-phosphate.</text>
</comment>
<comment type="catalytic activity">
    <reaction evidence="2">
        <text>a 1,2-diacyl-sn-glycero-3-phospho-(1D-myo-inositol-3,5-bisphosphate) + H2O = a 1,2-diacyl-sn-glycero-3-phospho-(1D-myo-inositol-5-phosphate) + phosphate</text>
        <dbReference type="Rhea" id="RHEA:39019"/>
        <dbReference type="ChEBI" id="CHEBI:15377"/>
        <dbReference type="ChEBI" id="CHEBI:43474"/>
        <dbReference type="ChEBI" id="CHEBI:57795"/>
        <dbReference type="ChEBI" id="CHEBI:57923"/>
        <dbReference type="EC" id="3.1.3.95"/>
    </reaction>
</comment>
<comment type="catalytic activity">
    <reaction evidence="2">
        <text>a 1,2-diacyl-sn-glycero-3-phospho-(1D-myo-inositol-3-phosphate) + H2O = a 1,2-diacyl-sn-glycero-3-phospho-(1D-myo-inositol) + phosphate</text>
        <dbReference type="Rhea" id="RHEA:12316"/>
        <dbReference type="ChEBI" id="CHEBI:15377"/>
        <dbReference type="ChEBI" id="CHEBI:43474"/>
        <dbReference type="ChEBI" id="CHEBI:57880"/>
        <dbReference type="ChEBI" id="CHEBI:58088"/>
    </reaction>
</comment>
<comment type="catalytic activity">
    <reaction evidence="2">
        <text>1,2-dioctanoyl-sn-glycero-3-phospho-(1D-myo-inositol-3,5-bisphosphate) + H2O = 1,2-dioctanoyl-sn-glycero-3-phospho-(1D-myo-inositol-5-phosphate) + phosphate</text>
        <dbReference type="Rhea" id="RHEA:45632"/>
        <dbReference type="ChEBI" id="CHEBI:15377"/>
        <dbReference type="ChEBI" id="CHEBI:43474"/>
        <dbReference type="ChEBI" id="CHEBI:78911"/>
        <dbReference type="ChEBI" id="CHEBI:85342"/>
    </reaction>
</comment>
<comment type="subunit">
    <text evidence="2">Homodimer.</text>
</comment>
<comment type="subcellular location">
    <subcellularLocation>
        <location evidence="2">Nucleus envelope</location>
    </subcellularLocation>
</comment>
<comment type="similarity">
    <text evidence="6">Belongs to the protein-tyrosine phosphatase family. Non-receptor class myotubularin subfamily.</text>
</comment>
<gene>
    <name type="primary">mtmr8</name>
    <name type="synonym">mtmr6</name>
    <name type="ORF">si:dkey-286f3.1</name>
    <name type="ORF">zgc:56405</name>
</gene>
<proteinExistence type="evidence at transcript level"/>
<keyword id="KW-0378">Hydrolase</keyword>
<keyword id="KW-0443">Lipid metabolism</keyword>
<keyword id="KW-0539">Nucleus</keyword>
<keyword id="KW-1185">Reference proteome</keyword>
<sequence length="632" mass="72503">MEHIITPKVENVKLLNRYTEKKSALGTLYLTATHLIYVEQTSNTRKETWVLHHHILSVEKLLLTASGCPLLIRCKTFQHLHLLFQKERDCQDVYQSLLRLFQPVKEEELYAFLYNPHQNEEERRRGWELISVVNDFNRMGLSNDYWEISHINKNFEMCSTYPSILGLPKSASVATVTGSAKFRSRGRLPVLSYYHKDTKAAICRCSQPLSGLNSRCVEDEQMLQAISQANPNSPFIYVVDTRPKLNAMANRAAGKGYENEDNYSNIRFQFQGIENIHVMRSSLQKLLEVCSMKSPSMSDYLTGLENSGWLRHIKSVMDAGVFLAKAVCEERASVLVHCSDGWDRTAQVCSLACLLLDPYYRTIKGLMVLIEKEWISFGHKFSHRCGHLDSDPKEASPVFTQFLECVWQLSQQFPCVFEFNEHYLIEIHDQVYACQYGNFIGNCQKERLDMRLHEKTFSLWPHLLENQHQYRNPLYRRSLESTVLRPSTLPLHFKFWCGMYNHYDRGMHPKQSVLDTLLTLTQRQVEGERTMTELQRQLAVADGVLPDPAGPINTHADQNNQSEKMPAPPVVQSNGSCAPLINGNVKEVGPGAENSNQEDREEPAANEHDLSSKDKPVFVETEHSKEEVQESS</sequence>
<reference key="1">
    <citation type="journal article" date="2004" name="Proc. Natl. Acad. Sci. U.S.A.">
        <title>Hematopoietic gene expression profile in zebrafish kidney marrow.</title>
        <authorList>
            <person name="Song H.-D."/>
            <person name="Sun X.-J."/>
            <person name="Deng M."/>
            <person name="Zhang G.-W."/>
            <person name="Zhou Y."/>
            <person name="Wu X.-Y."/>
            <person name="Sheng Y."/>
            <person name="Chen Y."/>
            <person name="Ruan Z."/>
            <person name="Jiang C.-L."/>
            <person name="Fan H.-Y."/>
            <person name="Zon L.I."/>
            <person name="Kanki J.P."/>
            <person name="Liu T.X."/>
            <person name="Look A.T."/>
            <person name="Chen Z."/>
        </authorList>
    </citation>
    <scope>NUCLEOTIDE SEQUENCE [LARGE SCALE MRNA]</scope>
    <source>
        <tissue>Kidney marrow</tissue>
    </source>
</reference>
<reference key="2">
    <citation type="journal article" date="2013" name="Nature">
        <title>The zebrafish reference genome sequence and its relationship to the human genome.</title>
        <authorList>
            <person name="Howe K."/>
            <person name="Clark M.D."/>
            <person name="Torroja C.F."/>
            <person name="Torrance J."/>
            <person name="Berthelot C."/>
            <person name="Muffato M."/>
            <person name="Collins J.E."/>
            <person name="Humphray S."/>
            <person name="McLaren K."/>
            <person name="Matthews L."/>
            <person name="McLaren S."/>
            <person name="Sealy I."/>
            <person name="Caccamo M."/>
            <person name="Churcher C."/>
            <person name="Scott C."/>
            <person name="Barrett J.C."/>
            <person name="Koch R."/>
            <person name="Rauch G.J."/>
            <person name="White S."/>
            <person name="Chow W."/>
            <person name="Kilian B."/>
            <person name="Quintais L.T."/>
            <person name="Guerra-Assuncao J.A."/>
            <person name="Zhou Y."/>
            <person name="Gu Y."/>
            <person name="Yen J."/>
            <person name="Vogel J.H."/>
            <person name="Eyre T."/>
            <person name="Redmond S."/>
            <person name="Banerjee R."/>
            <person name="Chi J."/>
            <person name="Fu B."/>
            <person name="Langley E."/>
            <person name="Maguire S.F."/>
            <person name="Laird G.K."/>
            <person name="Lloyd D."/>
            <person name="Kenyon E."/>
            <person name="Donaldson S."/>
            <person name="Sehra H."/>
            <person name="Almeida-King J."/>
            <person name="Loveland J."/>
            <person name="Trevanion S."/>
            <person name="Jones M."/>
            <person name="Quail M."/>
            <person name="Willey D."/>
            <person name="Hunt A."/>
            <person name="Burton J."/>
            <person name="Sims S."/>
            <person name="McLay K."/>
            <person name="Plumb B."/>
            <person name="Davis J."/>
            <person name="Clee C."/>
            <person name="Oliver K."/>
            <person name="Clark R."/>
            <person name="Riddle C."/>
            <person name="Elliot D."/>
            <person name="Threadgold G."/>
            <person name="Harden G."/>
            <person name="Ware D."/>
            <person name="Begum S."/>
            <person name="Mortimore B."/>
            <person name="Kerry G."/>
            <person name="Heath P."/>
            <person name="Phillimore B."/>
            <person name="Tracey A."/>
            <person name="Corby N."/>
            <person name="Dunn M."/>
            <person name="Johnson C."/>
            <person name="Wood J."/>
            <person name="Clark S."/>
            <person name="Pelan S."/>
            <person name="Griffiths G."/>
            <person name="Smith M."/>
            <person name="Glithero R."/>
            <person name="Howden P."/>
            <person name="Barker N."/>
            <person name="Lloyd C."/>
            <person name="Stevens C."/>
            <person name="Harley J."/>
            <person name="Holt K."/>
            <person name="Panagiotidis G."/>
            <person name="Lovell J."/>
            <person name="Beasley H."/>
            <person name="Henderson C."/>
            <person name="Gordon D."/>
            <person name="Auger K."/>
            <person name="Wright D."/>
            <person name="Collins J."/>
            <person name="Raisen C."/>
            <person name="Dyer L."/>
            <person name="Leung K."/>
            <person name="Robertson L."/>
            <person name="Ambridge K."/>
            <person name="Leongamornlert D."/>
            <person name="McGuire S."/>
            <person name="Gilderthorp R."/>
            <person name="Griffiths C."/>
            <person name="Manthravadi D."/>
            <person name="Nichol S."/>
            <person name="Barker G."/>
            <person name="Whitehead S."/>
            <person name="Kay M."/>
            <person name="Brown J."/>
            <person name="Murnane C."/>
            <person name="Gray E."/>
            <person name="Humphries M."/>
            <person name="Sycamore N."/>
            <person name="Barker D."/>
            <person name="Saunders D."/>
            <person name="Wallis J."/>
            <person name="Babbage A."/>
            <person name="Hammond S."/>
            <person name="Mashreghi-Mohammadi M."/>
            <person name="Barr L."/>
            <person name="Martin S."/>
            <person name="Wray P."/>
            <person name="Ellington A."/>
            <person name="Matthews N."/>
            <person name="Ellwood M."/>
            <person name="Woodmansey R."/>
            <person name="Clark G."/>
            <person name="Cooper J."/>
            <person name="Tromans A."/>
            <person name="Grafham D."/>
            <person name="Skuce C."/>
            <person name="Pandian R."/>
            <person name="Andrews R."/>
            <person name="Harrison E."/>
            <person name="Kimberley A."/>
            <person name="Garnett J."/>
            <person name="Fosker N."/>
            <person name="Hall R."/>
            <person name="Garner P."/>
            <person name="Kelly D."/>
            <person name="Bird C."/>
            <person name="Palmer S."/>
            <person name="Gehring I."/>
            <person name="Berger A."/>
            <person name="Dooley C.M."/>
            <person name="Ersan-Urun Z."/>
            <person name="Eser C."/>
            <person name="Geiger H."/>
            <person name="Geisler M."/>
            <person name="Karotki L."/>
            <person name="Kirn A."/>
            <person name="Konantz J."/>
            <person name="Konantz M."/>
            <person name="Oberlander M."/>
            <person name="Rudolph-Geiger S."/>
            <person name="Teucke M."/>
            <person name="Lanz C."/>
            <person name="Raddatz G."/>
            <person name="Osoegawa K."/>
            <person name="Zhu B."/>
            <person name="Rapp A."/>
            <person name="Widaa S."/>
            <person name="Langford C."/>
            <person name="Yang F."/>
            <person name="Schuster S.C."/>
            <person name="Carter N.P."/>
            <person name="Harrow J."/>
            <person name="Ning Z."/>
            <person name="Herrero J."/>
            <person name="Searle S.M."/>
            <person name="Enright A."/>
            <person name="Geisler R."/>
            <person name="Plasterk R.H."/>
            <person name="Lee C."/>
            <person name="Westerfield M."/>
            <person name="de Jong P.J."/>
            <person name="Zon L.I."/>
            <person name="Postlethwait J.H."/>
            <person name="Nusslein-Volhard C."/>
            <person name="Hubbard T.J."/>
            <person name="Roest Crollius H."/>
            <person name="Rogers J."/>
            <person name="Stemple D.L."/>
        </authorList>
    </citation>
    <scope>NUCLEOTIDE SEQUENCE [LARGE SCALE GENOMIC DNA]</scope>
    <source>
        <strain>Tuebingen</strain>
    </source>
</reference>
<reference key="3">
    <citation type="submission" date="2003-06" db="EMBL/GenBank/DDBJ databases">
        <authorList>
            <consortium name="NIH - Zebrafish Gene Collection (ZGC) project"/>
        </authorList>
    </citation>
    <scope>NUCLEOTIDE SEQUENCE [LARGE SCALE MRNA]</scope>
    <source>
        <tissue>Embryo</tissue>
    </source>
</reference>
<dbReference type="EC" id="3.1.3.95" evidence="2"/>
<dbReference type="EMBL" id="AY423041">
    <property type="protein sequence ID" value="AAQ98017.1"/>
    <property type="molecule type" value="mRNA"/>
</dbReference>
<dbReference type="EMBL" id="CR812469">
    <property type="protein sequence ID" value="CAM15913.1"/>
    <property type="molecule type" value="Genomic_DNA"/>
</dbReference>
<dbReference type="EMBL" id="BC053411">
    <property type="protein sequence ID" value="AAH53411.1"/>
    <property type="molecule type" value="mRNA"/>
</dbReference>
<dbReference type="RefSeq" id="NP_956688.1">
    <property type="nucleotide sequence ID" value="NM_200394.1"/>
</dbReference>
<dbReference type="SMR" id="Q6TEL0"/>
<dbReference type="FunCoup" id="Q6TEL0">
    <property type="interactions" value="1879"/>
</dbReference>
<dbReference type="STRING" id="7955.ENSDARP00000007263"/>
<dbReference type="PaxDb" id="7955-ENSDARP00000007263"/>
<dbReference type="Ensembl" id="ENSDART00000002938">
    <property type="protein sequence ID" value="ENSDARP00000007263"/>
    <property type="gene ID" value="ENSDARG00000008592"/>
</dbReference>
<dbReference type="Ensembl" id="ENSDART00000189357">
    <property type="protein sequence ID" value="ENSDARP00000146513"/>
    <property type="gene ID" value="ENSDARG00000113186"/>
</dbReference>
<dbReference type="GeneID" id="393365"/>
<dbReference type="KEGG" id="dre:393365"/>
<dbReference type="AGR" id="ZFIN:ZDB-GENE-040426-1016"/>
<dbReference type="CTD" id="55613"/>
<dbReference type="ZFIN" id="ZDB-GENE-040426-1016">
    <property type="gene designation" value="mtmr8"/>
</dbReference>
<dbReference type="eggNOG" id="KOG1089">
    <property type="taxonomic scope" value="Eukaryota"/>
</dbReference>
<dbReference type="HOGENOM" id="CLU_001839_3_2_1"/>
<dbReference type="InParanoid" id="Q6TEL0"/>
<dbReference type="OMA" id="FRFIGIE"/>
<dbReference type="OrthoDB" id="271628at2759"/>
<dbReference type="PhylomeDB" id="Q6TEL0"/>
<dbReference type="TreeFam" id="TF315197"/>
<dbReference type="Reactome" id="R-DRE-1660499">
    <property type="pathway name" value="Synthesis of PIPs at the plasma membrane"/>
</dbReference>
<dbReference type="PRO" id="PR:Q6TEL0"/>
<dbReference type="Proteomes" id="UP000000437">
    <property type="component" value="Alternate scaffold 5"/>
</dbReference>
<dbReference type="Proteomes" id="UP000000437">
    <property type="component" value="Chromosome 5"/>
</dbReference>
<dbReference type="Bgee" id="ENSDARG00000008592">
    <property type="expression patterns" value="Expressed in mature ovarian follicle and 27 other cell types or tissues"/>
</dbReference>
<dbReference type="GO" id="GO:0005737">
    <property type="term" value="C:cytoplasm"/>
    <property type="evidence" value="ECO:0000318"/>
    <property type="project" value="GO_Central"/>
</dbReference>
<dbReference type="GO" id="GO:0005635">
    <property type="term" value="C:nuclear envelope"/>
    <property type="evidence" value="ECO:0000318"/>
    <property type="project" value="GO_Central"/>
</dbReference>
<dbReference type="GO" id="GO:0004708">
    <property type="term" value="F:MAP kinase kinase activity"/>
    <property type="evidence" value="ECO:0000315"/>
    <property type="project" value="ZFIN"/>
</dbReference>
<dbReference type="GO" id="GO:0052629">
    <property type="term" value="F:phosphatidylinositol-3,5-bisphosphate 3-phosphatase activity"/>
    <property type="evidence" value="ECO:0007669"/>
    <property type="project" value="UniProtKB-EC"/>
</dbReference>
<dbReference type="GO" id="GO:0106018">
    <property type="term" value="F:phosphatidylinositol-3,5-bisphosphate phosphatase activity"/>
    <property type="evidence" value="ECO:0000318"/>
    <property type="project" value="GO_Central"/>
</dbReference>
<dbReference type="GO" id="GO:0004438">
    <property type="term" value="F:phosphatidylinositol-3-phosphate phosphatase activity"/>
    <property type="evidence" value="ECO:0000318"/>
    <property type="project" value="GO_Central"/>
</dbReference>
<dbReference type="GO" id="GO:0001568">
    <property type="term" value="P:blood vessel development"/>
    <property type="evidence" value="ECO:0000315"/>
    <property type="project" value="ZFIN"/>
</dbReference>
<dbReference type="GO" id="GO:0043491">
    <property type="term" value="P:phosphatidylinositol 3-kinase/protein kinase B signal transduction"/>
    <property type="evidence" value="ECO:0000315"/>
    <property type="project" value="ZFIN"/>
</dbReference>
<dbReference type="GO" id="GO:0046856">
    <property type="term" value="P:phosphatidylinositol dephosphorylation"/>
    <property type="evidence" value="ECO:0000318"/>
    <property type="project" value="GO_Central"/>
</dbReference>
<dbReference type="CDD" id="cd14584">
    <property type="entry name" value="PTP-MTMR8"/>
    <property type="match status" value="1"/>
</dbReference>
<dbReference type="FunFam" id="2.30.29.30:FF:000135">
    <property type="entry name" value="Myotubularin related protein 6"/>
    <property type="match status" value="1"/>
</dbReference>
<dbReference type="Gene3D" id="2.30.29.30">
    <property type="entry name" value="Pleckstrin-homology domain (PH domain)/Phosphotyrosine-binding domain (PTB)"/>
    <property type="match status" value="1"/>
</dbReference>
<dbReference type="InterPro" id="IPR030591">
    <property type="entry name" value="MTMR8_PTP"/>
</dbReference>
<dbReference type="InterPro" id="IPR030564">
    <property type="entry name" value="Myotubularin"/>
</dbReference>
<dbReference type="InterPro" id="IPR010569">
    <property type="entry name" value="Myotubularin-like_Pase_dom"/>
</dbReference>
<dbReference type="InterPro" id="IPR011993">
    <property type="entry name" value="PH-like_dom_sf"/>
</dbReference>
<dbReference type="InterPro" id="IPR029021">
    <property type="entry name" value="Prot-tyrosine_phosphatase-like"/>
</dbReference>
<dbReference type="InterPro" id="IPR016130">
    <property type="entry name" value="Tyr_Pase_AS"/>
</dbReference>
<dbReference type="InterPro" id="IPR003595">
    <property type="entry name" value="Tyr_Pase_cat"/>
</dbReference>
<dbReference type="PANTHER" id="PTHR10807">
    <property type="entry name" value="MYOTUBULARIN-RELATED"/>
    <property type="match status" value="1"/>
</dbReference>
<dbReference type="PANTHER" id="PTHR10807:SF36">
    <property type="entry name" value="MYOTUBULARIN-RELATED PROTEIN 8"/>
    <property type="match status" value="1"/>
</dbReference>
<dbReference type="Pfam" id="PF06602">
    <property type="entry name" value="Myotub-related"/>
    <property type="match status" value="1"/>
</dbReference>
<dbReference type="Pfam" id="PF21098">
    <property type="entry name" value="PH-GRAM_MTMR6-like"/>
    <property type="match status" value="1"/>
</dbReference>
<dbReference type="SMART" id="SM00404">
    <property type="entry name" value="PTPc_motif"/>
    <property type="match status" value="1"/>
</dbReference>
<dbReference type="SUPFAM" id="SSF52799">
    <property type="entry name" value="(Phosphotyrosine protein) phosphatases II"/>
    <property type="match status" value="1"/>
</dbReference>
<dbReference type="SUPFAM" id="SSF50729">
    <property type="entry name" value="PH domain-like"/>
    <property type="match status" value="1"/>
</dbReference>
<dbReference type="PROSITE" id="PS51339">
    <property type="entry name" value="PPASE_MYOTUBULARIN"/>
    <property type="match status" value="1"/>
</dbReference>
<dbReference type="PROSITE" id="PS00383">
    <property type="entry name" value="TYR_PHOSPHATASE_1"/>
    <property type="match status" value="1"/>
</dbReference>
<name>MTMR8_DANRE</name>